<sequence length="471" mass="51791">MNPTTATDAHERTSLLSGRPQSAANSTAPYERQVQPSRKSQCFTPVTVITIITLIYRLATTMVITTNIRVLHTVACQLWYHVNDPDVFPGGNIPEKYCALPGVDKYYAIMVSMTTVIDGLGGILGTGIASYMSSRFGRKPVLMFLLSCTMIDHLAILTVQNVYGWKQLVTFGLIMIVETIGNENTTVFLVSMYVVDVTEAERRTAALSSITGWLVLGGALAYSIGGSITTFLHSNSAVYIVSFSVTGIVLTFTAFVLPESFPAEKRDLLRLERLAETRGHSQSWTQKIKAVATVALEPMELLKPTFNPITGKANWRLVYCALHSFIVTLADAYALPAMLIFFTTQYSYTPAQMGYVMTTYSVSSVFVLAIALPLFIRWFKPLYNNTQTKSVPDEGDGLRATDSGEAGVHTQEVVVSETSDRMDVHITVISWTIESLAYIVLGTVGSFYAQLLGRPLPLLALDLDAFQEFEA</sequence>
<proteinExistence type="evidence at transcript level"/>
<evidence type="ECO:0000255" key="1"/>
<evidence type="ECO:0000255" key="2">
    <source>
        <dbReference type="PROSITE-ProRule" id="PRU00498"/>
    </source>
</evidence>
<evidence type="ECO:0000256" key="3">
    <source>
        <dbReference type="SAM" id="MobiDB-lite"/>
    </source>
</evidence>
<evidence type="ECO:0000303" key="4">
    <source>
    </source>
</evidence>
<evidence type="ECO:0000305" key="5"/>
<evidence type="ECO:0000305" key="6">
    <source>
    </source>
</evidence>
<gene>
    <name evidence="4" type="primary">psiT1</name>
</gene>
<comment type="function">
    <text evidence="6">Major facilitator-type transporter; part of the gene cluster that mediates the biosynthesis of psilocybin, a psychotropic tryptamine-derived natural product.</text>
</comment>
<comment type="subcellular location">
    <subcellularLocation>
        <location evidence="1">Membrane</location>
        <topology evidence="1">Multi-pass membrane protein</topology>
    </subcellularLocation>
</comment>
<comment type="similarity">
    <text evidence="5">Belongs to the major facilitator superfamily. TCR/Tet family.</text>
</comment>
<reference key="1">
    <citation type="journal article" date="2017" name="Angew. Chem. Int. Ed.">
        <title>Enzymatic synthesis of psilocybin.</title>
        <authorList>
            <person name="Fricke J."/>
            <person name="Blei F."/>
            <person name="Hoffmeister D."/>
        </authorList>
    </citation>
    <scope>NUCLEOTIDE SEQUENCE [MRNA]</scope>
    <scope>IDENTIFICATION</scope>
    <scope>FUNCTION</scope>
    <source>
        <strain>FSU 12416</strain>
    </source>
</reference>
<feature type="chain" id="PRO_0000445831" description="Major facilitator-type transporter psiT1">
    <location>
        <begin position="1"/>
        <end position="471"/>
    </location>
</feature>
<feature type="transmembrane region" description="Helical" evidence="1">
    <location>
        <begin position="44"/>
        <end position="64"/>
    </location>
</feature>
<feature type="transmembrane region" description="Helical" evidence="1">
    <location>
        <begin position="108"/>
        <end position="128"/>
    </location>
</feature>
<feature type="transmembrane region" description="Helical" evidence="1">
    <location>
        <begin position="140"/>
        <end position="160"/>
    </location>
</feature>
<feature type="transmembrane region" description="Helical" evidence="1">
    <location>
        <begin position="168"/>
        <end position="188"/>
    </location>
</feature>
<feature type="transmembrane region" description="Helical" evidence="1">
    <location>
        <begin position="212"/>
        <end position="232"/>
    </location>
</feature>
<feature type="transmembrane region" description="Helical" evidence="1">
    <location>
        <begin position="237"/>
        <end position="257"/>
    </location>
</feature>
<feature type="transmembrane region" description="Helical" evidence="1">
    <location>
        <begin position="322"/>
        <end position="342"/>
    </location>
</feature>
<feature type="transmembrane region" description="Helical" evidence="1">
    <location>
        <begin position="356"/>
        <end position="376"/>
    </location>
</feature>
<feature type="transmembrane region" description="Helical" evidence="1">
    <location>
        <begin position="424"/>
        <end position="444"/>
    </location>
</feature>
<feature type="region of interest" description="Disordered" evidence="3">
    <location>
        <begin position="1"/>
        <end position="36"/>
    </location>
</feature>
<feature type="compositionally biased region" description="Polar residues" evidence="3">
    <location>
        <begin position="14"/>
        <end position="36"/>
    </location>
</feature>
<feature type="glycosylation site" description="N-linked (GlcNAc...) asparagine" evidence="2">
    <location>
        <position position="25"/>
    </location>
</feature>
<feature type="glycosylation site" description="N-linked (GlcNAc...) asparagine" evidence="2">
    <location>
        <position position="384"/>
    </location>
</feature>
<name>PSIT1_PSICY</name>
<protein>
    <recommendedName>
        <fullName evidence="4">Major facilitator-type transporter psiT1</fullName>
    </recommendedName>
    <alternativeName>
        <fullName evidence="4">Psilocybin biosynthesis cluster transporter 1</fullName>
    </alternativeName>
</protein>
<organism>
    <name type="scientific">Psilocybe cyanescens</name>
    <dbReference type="NCBI Taxonomy" id="93625"/>
    <lineage>
        <taxon>Eukaryota</taxon>
        <taxon>Fungi</taxon>
        <taxon>Dikarya</taxon>
        <taxon>Basidiomycota</taxon>
        <taxon>Agaricomycotina</taxon>
        <taxon>Agaricomycetes</taxon>
        <taxon>Agaricomycetidae</taxon>
        <taxon>Agaricales</taxon>
        <taxon>Agaricineae</taxon>
        <taxon>Strophariaceae</taxon>
        <taxon>Psilocybe</taxon>
    </lineage>
</organism>
<accession>A0A286LF00</accession>
<dbReference type="EMBL" id="MF000995">
    <property type="protein sequence ID" value="ASU62248.1"/>
    <property type="molecule type" value="Genomic_DNA"/>
</dbReference>
<dbReference type="GlyCosmos" id="A0A286LF00">
    <property type="glycosylation" value="2 sites, No reported glycans"/>
</dbReference>
<dbReference type="GO" id="GO:0016020">
    <property type="term" value="C:membrane"/>
    <property type="evidence" value="ECO:0007669"/>
    <property type="project" value="UniProtKB-SubCell"/>
</dbReference>
<dbReference type="GO" id="GO:0022857">
    <property type="term" value="F:transmembrane transporter activity"/>
    <property type="evidence" value="ECO:0007669"/>
    <property type="project" value="InterPro"/>
</dbReference>
<dbReference type="Gene3D" id="1.20.1250.20">
    <property type="entry name" value="MFS general substrate transporter like domains"/>
    <property type="match status" value="1"/>
</dbReference>
<dbReference type="InterPro" id="IPR011701">
    <property type="entry name" value="MFS"/>
</dbReference>
<dbReference type="InterPro" id="IPR036259">
    <property type="entry name" value="MFS_trans_sf"/>
</dbReference>
<dbReference type="PANTHER" id="PTHR23507:SF1">
    <property type="entry name" value="FI18259P1-RELATED"/>
    <property type="match status" value="1"/>
</dbReference>
<dbReference type="PANTHER" id="PTHR23507">
    <property type="entry name" value="ZGC:174356"/>
    <property type="match status" value="1"/>
</dbReference>
<dbReference type="Pfam" id="PF07690">
    <property type="entry name" value="MFS_1"/>
    <property type="match status" value="1"/>
</dbReference>
<dbReference type="SUPFAM" id="SSF103473">
    <property type="entry name" value="MFS general substrate transporter"/>
    <property type="match status" value="1"/>
</dbReference>
<keyword id="KW-0325">Glycoprotein</keyword>
<keyword id="KW-0472">Membrane</keyword>
<keyword id="KW-0812">Transmembrane</keyword>
<keyword id="KW-1133">Transmembrane helix</keyword>
<keyword id="KW-0813">Transport</keyword>